<dbReference type="EMBL" id="AE005674">
    <property type="protein sequence ID" value="AAN42051.2"/>
    <property type="molecule type" value="Genomic_DNA"/>
</dbReference>
<dbReference type="EMBL" id="AE014073">
    <property type="protein sequence ID" value="AAP15928.1"/>
    <property type="molecule type" value="Genomic_DNA"/>
</dbReference>
<dbReference type="RefSeq" id="NP_706344.2">
    <property type="nucleotide sequence ID" value="NC_004337.2"/>
</dbReference>
<dbReference type="RefSeq" id="WP_000780338.1">
    <property type="nucleotide sequence ID" value="NZ_WPGW01000052.1"/>
</dbReference>
<dbReference type="SMR" id="P0AC58"/>
<dbReference type="STRING" id="198214.SF0395"/>
<dbReference type="PaxDb" id="198214-SF0395"/>
<dbReference type="GeneID" id="1027682"/>
<dbReference type="GeneID" id="93777000"/>
<dbReference type="KEGG" id="sfl:SF0395"/>
<dbReference type="KEGG" id="sfx:S0401"/>
<dbReference type="PATRIC" id="fig|198214.7.peg.454"/>
<dbReference type="HOGENOM" id="CLU_082268_0_0_6"/>
<dbReference type="Proteomes" id="UP000001006">
    <property type="component" value="Chromosome"/>
</dbReference>
<dbReference type="Proteomes" id="UP000002673">
    <property type="component" value="Chromosome"/>
</dbReference>
<dbReference type="GO" id="GO:0005829">
    <property type="term" value="C:cytosol"/>
    <property type="evidence" value="ECO:0007669"/>
    <property type="project" value="TreeGrafter"/>
</dbReference>
<dbReference type="GO" id="GO:0005886">
    <property type="term" value="C:plasma membrane"/>
    <property type="evidence" value="ECO:0007669"/>
    <property type="project" value="UniProtKB-SubCell"/>
</dbReference>
<dbReference type="GO" id="GO:0005524">
    <property type="term" value="F:ATP binding"/>
    <property type="evidence" value="ECO:0007669"/>
    <property type="project" value="UniProtKB-KW"/>
</dbReference>
<dbReference type="GO" id="GO:0030234">
    <property type="term" value="F:enzyme regulator activity"/>
    <property type="evidence" value="ECO:0007669"/>
    <property type="project" value="InterPro"/>
</dbReference>
<dbReference type="GO" id="GO:0006808">
    <property type="term" value="P:regulation of nitrogen utilization"/>
    <property type="evidence" value="ECO:0007669"/>
    <property type="project" value="InterPro"/>
</dbReference>
<dbReference type="FunFam" id="3.30.70.120:FF:000001">
    <property type="entry name" value="Nitrogen regulatory protein P-II"/>
    <property type="match status" value="1"/>
</dbReference>
<dbReference type="Gene3D" id="3.30.70.120">
    <property type="match status" value="1"/>
</dbReference>
<dbReference type="InterPro" id="IPR002187">
    <property type="entry name" value="N-reg_PII"/>
</dbReference>
<dbReference type="InterPro" id="IPR011322">
    <property type="entry name" value="N-reg_PII-like_a/b"/>
</dbReference>
<dbReference type="InterPro" id="IPR015867">
    <property type="entry name" value="N-reg_PII/ATP_PRibTrfase_C"/>
</dbReference>
<dbReference type="InterPro" id="IPR017918">
    <property type="entry name" value="N-reg_PII_CS"/>
</dbReference>
<dbReference type="InterPro" id="IPR002332">
    <property type="entry name" value="N-reg_PII_urydylation_site"/>
</dbReference>
<dbReference type="NCBIfam" id="NF007946">
    <property type="entry name" value="PRK10665.1"/>
    <property type="match status" value="1"/>
</dbReference>
<dbReference type="PANTHER" id="PTHR30115:SF20">
    <property type="entry name" value="NITROGEN REGULATORY PROTEIN GLNK"/>
    <property type="match status" value="1"/>
</dbReference>
<dbReference type="PANTHER" id="PTHR30115">
    <property type="entry name" value="NITROGEN REGULATORY PROTEIN P-II"/>
    <property type="match status" value="1"/>
</dbReference>
<dbReference type="Pfam" id="PF00543">
    <property type="entry name" value="P-II"/>
    <property type="match status" value="1"/>
</dbReference>
<dbReference type="PIRSF" id="PIRSF039144">
    <property type="entry name" value="GlnB"/>
    <property type="match status" value="1"/>
</dbReference>
<dbReference type="PRINTS" id="PR00340">
    <property type="entry name" value="PIIGLNB"/>
</dbReference>
<dbReference type="SMART" id="SM00938">
    <property type="entry name" value="P-II"/>
    <property type="match status" value="1"/>
</dbReference>
<dbReference type="SUPFAM" id="SSF54913">
    <property type="entry name" value="GlnB-like"/>
    <property type="match status" value="1"/>
</dbReference>
<dbReference type="PROSITE" id="PS00638">
    <property type="entry name" value="PII_GLNB_CTER"/>
    <property type="match status" value="1"/>
</dbReference>
<dbReference type="PROSITE" id="PS51343">
    <property type="entry name" value="PII_GLNB_DOM"/>
    <property type="match status" value="1"/>
</dbReference>
<dbReference type="PROSITE" id="PS00496">
    <property type="entry name" value="PII_GLNB_UMP"/>
    <property type="match status" value="1"/>
</dbReference>
<protein>
    <recommendedName>
        <fullName evidence="1">Nitrogen regulatory protein GlnK</fullName>
    </recommendedName>
    <alternativeName>
        <fullName evidence="1">Nitrogen regulatory protein P-II 2</fullName>
    </alternativeName>
</protein>
<evidence type="ECO:0000250" key="1">
    <source>
        <dbReference type="UniProtKB" id="P0AC55"/>
    </source>
</evidence>
<evidence type="ECO:0000255" key="2">
    <source>
        <dbReference type="PROSITE-ProRule" id="PRU00675"/>
    </source>
</evidence>
<comment type="function">
    <text evidence="1">Involved in the regulation of nitrogen metabolism. Regulates the activity of its targets by protein-protein interaction in response to the nitrogen status of the cell. Involved in the regulation of the ammonium transporter AmtB so as to optimize ammonium uptake under all growth conditions. In nitrogen-limited conditions, GlnK does not interact with AmtB, which remains active and imports ammonium. When extracellular ammonium increases, GlnK associates tightly with AmtB in the inner membrane, thereby inhibiting the transporter activity.</text>
</comment>
<comment type="activity regulation">
    <text evidence="1">Formation of the GlnK-AmtB complex is influenced by intracellular pools of the effector molecules ATP, ADP, Mg(2+) and 2-oxoglutarate. The GlnK-AmtB interaction is also controlled by the level of intracellular glutamine and the uridylylation status of GlnK.</text>
</comment>
<comment type="subunit">
    <text evidence="1">Homotrimer. In response to elevation of the extracellular ammonium concentration, interacts and forms a complex with AmtB.</text>
</comment>
<comment type="subcellular location">
    <subcellularLocation>
        <location evidence="1">Cytoplasm</location>
    </subcellularLocation>
    <subcellularLocation>
        <location evidence="1">Cell inner membrane</location>
    </subcellularLocation>
    <text evidence="1">During nitrogen limitation, GlnK is predominantly in its fully uridylylated state in the cytoplasmic fraction. In response to nitrogen shock, GlnK is deuridylylated rapidly and associates tightly with AmtB in the inner membrane.</text>
</comment>
<comment type="PTM">
    <text evidence="1">Uridylylated/deuridylylated by GlnD. Fully uridylylated in nitrogen-limited conditions and deuridylylated when extracellular ammonium increases.</text>
</comment>
<comment type="similarity">
    <text evidence="2">Belongs to the P(II) protein family.</text>
</comment>
<feature type="chain" id="PRO_0000139792" description="Nitrogen regulatory protein GlnK">
    <location>
        <begin position="1"/>
        <end position="112"/>
    </location>
</feature>
<feature type="binding site" evidence="1">
    <location>
        <position position="29"/>
    </location>
    <ligand>
        <name>ADP</name>
        <dbReference type="ChEBI" id="CHEBI:456216"/>
    </ligand>
</feature>
<feature type="binding site" evidence="1">
    <location>
        <position position="37"/>
    </location>
    <ligand>
        <name>ATP</name>
        <dbReference type="ChEBI" id="CHEBI:30616"/>
    </ligand>
</feature>
<feature type="binding site" evidence="1">
    <location>
        <begin position="38"/>
        <end position="39"/>
    </location>
    <ligand>
        <name>ADP</name>
        <dbReference type="ChEBI" id="CHEBI:456216"/>
    </ligand>
</feature>
<feature type="binding site" evidence="1">
    <location>
        <position position="64"/>
    </location>
    <ligand>
        <name>ADP</name>
        <dbReference type="ChEBI" id="CHEBI:456216"/>
    </ligand>
</feature>
<feature type="binding site" evidence="1">
    <location>
        <position position="64"/>
    </location>
    <ligand>
        <name>ATP</name>
        <dbReference type="ChEBI" id="CHEBI:30616"/>
    </ligand>
</feature>
<feature type="binding site" evidence="1">
    <location>
        <begin position="87"/>
        <end position="90"/>
    </location>
    <ligand>
        <name>ADP</name>
        <dbReference type="ChEBI" id="CHEBI:456216"/>
    </ligand>
</feature>
<feature type="binding site" evidence="1">
    <location>
        <begin position="87"/>
        <end position="90"/>
    </location>
    <ligand>
        <name>ATP</name>
        <dbReference type="ChEBI" id="CHEBI:30616"/>
    </ligand>
</feature>
<feature type="binding site" evidence="1">
    <location>
        <begin position="101"/>
        <end position="103"/>
    </location>
    <ligand>
        <name>ADP</name>
        <dbReference type="ChEBI" id="CHEBI:456216"/>
    </ligand>
</feature>
<feature type="binding site" evidence="1">
    <location>
        <begin position="101"/>
        <end position="103"/>
    </location>
    <ligand>
        <name>ATP</name>
        <dbReference type="ChEBI" id="CHEBI:30616"/>
    </ligand>
</feature>
<feature type="modified residue" description="O-UMP-tyrosine" evidence="2">
    <location>
        <position position="51"/>
    </location>
</feature>
<name>GLNK_SHIFL</name>
<proteinExistence type="inferred from homology"/>
<organism>
    <name type="scientific">Shigella flexneri</name>
    <dbReference type="NCBI Taxonomy" id="623"/>
    <lineage>
        <taxon>Bacteria</taxon>
        <taxon>Pseudomonadati</taxon>
        <taxon>Pseudomonadota</taxon>
        <taxon>Gammaproteobacteria</taxon>
        <taxon>Enterobacterales</taxon>
        <taxon>Enterobacteriaceae</taxon>
        <taxon>Shigella</taxon>
    </lineage>
</organism>
<accession>P0AC58</accession>
<accession>P38504</accession>
<accession>P77118</accession>
<keyword id="KW-0067">ATP-binding</keyword>
<keyword id="KW-0997">Cell inner membrane</keyword>
<keyword id="KW-1003">Cell membrane</keyword>
<keyword id="KW-0963">Cytoplasm</keyword>
<keyword id="KW-0472">Membrane</keyword>
<keyword id="KW-0547">Nucleotide-binding</keyword>
<keyword id="KW-0597">Phosphoprotein</keyword>
<keyword id="KW-1185">Reference proteome</keyword>
<sequence length="112" mass="12259">MKLVTVIIKPFKLEDVREALSSIGIQGLTVTEVKGFGRQKGHAELYRGAEYSVNFLPKVKIDVAIADDQLDEVIDIVSKAAYTGKIGDGKIFVAELQRVIRIRTGEADEAAL</sequence>
<reference key="1">
    <citation type="journal article" date="2002" name="Nucleic Acids Res.">
        <title>Genome sequence of Shigella flexneri 2a: insights into pathogenicity through comparison with genomes of Escherichia coli K12 and O157.</title>
        <authorList>
            <person name="Jin Q."/>
            <person name="Yuan Z."/>
            <person name="Xu J."/>
            <person name="Wang Y."/>
            <person name="Shen Y."/>
            <person name="Lu W."/>
            <person name="Wang J."/>
            <person name="Liu H."/>
            <person name="Yang J."/>
            <person name="Yang F."/>
            <person name="Zhang X."/>
            <person name="Zhang J."/>
            <person name="Yang G."/>
            <person name="Wu H."/>
            <person name="Qu D."/>
            <person name="Dong J."/>
            <person name="Sun L."/>
            <person name="Xue Y."/>
            <person name="Zhao A."/>
            <person name="Gao Y."/>
            <person name="Zhu J."/>
            <person name="Kan B."/>
            <person name="Ding K."/>
            <person name="Chen S."/>
            <person name="Cheng H."/>
            <person name="Yao Z."/>
            <person name="He B."/>
            <person name="Chen R."/>
            <person name="Ma D."/>
            <person name="Qiang B."/>
            <person name="Wen Y."/>
            <person name="Hou Y."/>
            <person name="Yu J."/>
        </authorList>
    </citation>
    <scope>NUCLEOTIDE SEQUENCE [LARGE SCALE GENOMIC DNA]</scope>
    <source>
        <strain>301 / Serotype 2a</strain>
    </source>
</reference>
<reference key="2">
    <citation type="journal article" date="2003" name="Infect. Immun.">
        <title>Complete genome sequence and comparative genomics of Shigella flexneri serotype 2a strain 2457T.</title>
        <authorList>
            <person name="Wei J."/>
            <person name="Goldberg M.B."/>
            <person name="Burland V."/>
            <person name="Venkatesan M.M."/>
            <person name="Deng W."/>
            <person name="Fournier G."/>
            <person name="Mayhew G.F."/>
            <person name="Plunkett G. III"/>
            <person name="Rose D.J."/>
            <person name="Darling A."/>
            <person name="Mau B."/>
            <person name="Perna N.T."/>
            <person name="Payne S.M."/>
            <person name="Runyen-Janecky L.J."/>
            <person name="Zhou S."/>
            <person name="Schwartz D.C."/>
            <person name="Blattner F.R."/>
        </authorList>
    </citation>
    <scope>NUCLEOTIDE SEQUENCE [LARGE SCALE GENOMIC DNA]</scope>
    <source>
        <strain>ATCC 700930 / 2457T / Serotype 2a</strain>
    </source>
</reference>
<gene>
    <name type="primary">glnK</name>
    <name type="ordered locus">SF0395</name>
    <name type="ordered locus">S0401</name>
</gene>